<sequence>MNLAVVGYKLTLSYCGSGFHGWQRQGELPTVQRALEEAVAKIWEEPIPVEGAGRTDAGVHAKGQVASFAAPRKLEPEVLKRALNYHLPDTVRVWDARIVPREFSARFDAVSKTYQYLLWNDPVMDPFYLGRAWHIPRAMDVEMMNEAARLFLGKHNFAAFVSNPGMPVKNPVRTVLDCFFLEQGSLVFFNVKADGFLYRMVRNMVGALVKVGLGRLSRQELKKIFENQKRIEAFAAAPPWGLYLLAVDYPPDQES</sequence>
<feature type="chain" id="PRO_1000203696" description="tRNA pseudouridine synthase A">
    <location>
        <begin position="1"/>
        <end position="255"/>
    </location>
</feature>
<feature type="active site" description="Nucleophile" evidence="1">
    <location>
        <position position="56"/>
    </location>
</feature>
<feature type="binding site" evidence="1">
    <location>
        <position position="114"/>
    </location>
    <ligand>
        <name>substrate</name>
    </ligand>
</feature>
<organism>
    <name type="scientific">Methylacidiphilum infernorum (isolate V4)</name>
    <name type="common">Methylokorus infernorum (strain V4)</name>
    <dbReference type="NCBI Taxonomy" id="481448"/>
    <lineage>
        <taxon>Bacteria</taxon>
        <taxon>Pseudomonadati</taxon>
        <taxon>Verrucomicrobiota</taxon>
        <taxon>Methylacidiphilae</taxon>
        <taxon>Methylacidiphilales</taxon>
        <taxon>Methylacidiphilaceae</taxon>
        <taxon>Methylacidiphilum (ex Ratnadevi et al. 2023)</taxon>
    </lineage>
</organism>
<dbReference type="EC" id="5.4.99.12" evidence="1"/>
<dbReference type="EMBL" id="CP000975">
    <property type="protein sequence ID" value="ACD84329.1"/>
    <property type="molecule type" value="Genomic_DNA"/>
</dbReference>
<dbReference type="RefSeq" id="WP_012464609.1">
    <property type="nucleotide sequence ID" value="NC_010794.1"/>
</dbReference>
<dbReference type="SMR" id="B3E0A0"/>
<dbReference type="STRING" id="481448.Minf_2275"/>
<dbReference type="KEGG" id="min:Minf_2275"/>
<dbReference type="eggNOG" id="COG0101">
    <property type="taxonomic scope" value="Bacteria"/>
</dbReference>
<dbReference type="HOGENOM" id="CLU_014673_0_1_0"/>
<dbReference type="OrthoDB" id="9811823at2"/>
<dbReference type="Proteomes" id="UP000009149">
    <property type="component" value="Chromosome"/>
</dbReference>
<dbReference type="GO" id="GO:0003723">
    <property type="term" value="F:RNA binding"/>
    <property type="evidence" value="ECO:0007669"/>
    <property type="project" value="InterPro"/>
</dbReference>
<dbReference type="GO" id="GO:0160147">
    <property type="term" value="F:tRNA pseudouridine(38-40) synthase activity"/>
    <property type="evidence" value="ECO:0007669"/>
    <property type="project" value="UniProtKB-EC"/>
</dbReference>
<dbReference type="GO" id="GO:0031119">
    <property type="term" value="P:tRNA pseudouridine synthesis"/>
    <property type="evidence" value="ECO:0007669"/>
    <property type="project" value="UniProtKB-UniRule"/>
</dbReference>
<dbReference type="CDD" id="cd02570">
    <property type="entry name" value="PseudoU_synth_EcTruA"/>
    <property type="match status" value="1"/>
</dbReference>
<dbReference type="FunFam" id="3.30.70.580:FF:000001">
    <property type="entry name" value="tRNA pseudouridine synthase A"/>
    <property type="match status" value="1"/>
</dbReference>
<dbReference type="Gene3D" id="3.30.70.660">
    <property type="entry name" value="Pseudouridine synthase I, catalytic domain, C-terminal subdomain"/>
    <property type="match status" value="1"/>
</dbReference>
<dbReference type="Gene3D" id="3.30.70.580">
    <property type="entry name" value="Pseudouridine synthase I, catalytic domain, N-terminal subdomain"/>
    <property type="match status" value="1"/>
</dbReference>
<dbReference type="HAMAP" id="MF_00171">
    <property type="entry name" value="TruA"/>
    <property type="match status" value="1"/>
</dbReference>
<dbReference type="InterPro" id="IPR020103">
    <property type="entry name" value="PsdUridine_synth_cat_dom_sf"/>
</dbReference>
<dbReference type="InterPro" id="IPR001406">
    <property type="entry name" value="PsdUridine_synth_TruA"/>
</dbReference>
<dbReference type="InterPro" id="IPR020097">
    <property type="entry name" value="PsdUridine_synth_TruA_a/b_dom"/>
</dbReference>
<dbReference type="InterPro" id="IPR020095">
    <property type="entry name" value="PsdUridine_synth_TruA_C"/>
</dbReference>
<dbReference type="InterPro" id="IPR020094">
    <property type="entry name" value="TruA/RsuA/RluB/E/F_N"/>
</dbReference>
<dbReference type="NCBIfam" id="TIGR00071">
    <property type="entry name" value="hisT_truA"/>
    <property type="match status" value="1"/>
</dbReference>
<dbReference type="PANTHER" id="PTHR11142">
    <property type="entry name" value="PSEUDOURIDYLATE SYNTHASE"/>
    <property type="match status" value="1"/>
</dbReference>
<dbReference type="PANTHER" id="PTHR11142:SF0">
    <property type="entry name" value="TRNA PSEUDOURIDINE SYNTHASE-LIKE 1"/>
    <property type="match status" value="1"/>
</dbReference>
<dbReference type="Pfam" id="PF01416">
    <property type="entry name" value="PseudoU_synth_1"/>
    <property type="match status" value="2"/>
</dbReference>
<dbReference type="PIRSF" id="PIRSF001430">
    <property type="entry name" value="tRNA_psdUrid_synth"/>
    <property type="match status" value="1"/>
</dbReference>
<dbReference type="SUPFAM" id="SSF55120">
    <property type="entry name" value="Pseudouridine synthase"/>
    <property type="match status" value="1"/>
</dbReference>
<protein>
    <recommendedName>
        <fullName evidence="1">tRNA pseudouridine synthase A</fullName>
        <ecNumber evidence="1">5.4.99.12</ecNumber>
    </recommendedName>
    <alternativeName>
        <fullName evidence="1">tRNA pseudouridine(38-40) synthase</fullName>
    </alternativeName>
    <alternativeName>
        <fullName evidence="1">tRNA pseudouridylate synthase I</fullName>
    </alternativeName>
    <alternativeName>
        <fullName evidence="1">tRNA-uridine isomerase I</fullName>
    </alternativeName>
</protein>
<evidence type="ECO:0000255" key="1">
    <source>
        <dbReference type="HAMAP-Rule" id="MF_00171"/>
    </source>
</evidence>
<accession>B3E0A0</accession>
<proteinExistence type="inferred from homology"/>
<keyword id="KW-0413">Isomerase</keyword>
<keyword id="KW-0819">tRNA processing</keyword>
<name>TRUA_METI4</name>
<comment type="function">
    <text evidence="1">Formation of pseudouridine at positions 38, 39 and 40 in the anticodon stem and loop of transfer RNAs.</text>
</comment>
<comment type="catalytic activity">
    <reaction evidence="1">
        <text>uridine(38/39/40) in tRNA = pseudouridine(38/39/40) in tRNA</text>
        <dbReference type="Rhea" id="RHEA:22376"/>
        <dbReference type="Rhea" id="RHEA-COMP:10085"/>
        <dbReference type="Rhea" id="RHEA-COMP:10087"/>
        <dbReference type="ChEBI" id="CHEBI:65314"/>
        <dbReference type="ChEBI" id="CHEBI:65315"/>
        <dbReference type="EC" id="5.4.99.12"/>
    </reaction>
</comment>
<comment type="subunit">
    <text evidence="1">Homodimer.</text>
</comment>
<comment type="similarity">
    <text evidence="1">Belongs to the tRNA pseudouridine synthase TruA family.</text>
</comment>
<gene>
    <name evidence="1" type="primary">truA</name>
    <name type="ordered locus">Minf_2275</name>
</gene>
<reference key="1">
    <citation type="journal article" date="2008" name="Biol. Direct">
        <title>Complete genome sequence of the extremely acidophilic methanotroph isolate V4, Methylacidiphilum infernorum, a representative of the bacterial phylum Verrucomicrobia.</title>
        <authorList>
            <person name="Hou S."/>
            <person name="Makarova K.S."/>
            <person name="Saw J.H."/>
            <person name="Senin P."/>
            <person name="Ly B.V."/>
            <person name="Zhou Z."/>
            <person name="Ren Y."/>
            <person name="Wang J."/>
            <person name="Galperin M.Y."/>
            <person name="Omelchenko M.V."/>
            <person name="Wolf Y.I."/>
            <person name="Yutin N."/>
            <person name="Koonin E.V."/>
            <person name="Stott M.B."/>
            <person name="Mountain B.W."/>
            <person name="Crowe M.A."/>
            <person name="Smirnova A.V."/>
            <person name="Dunfield P.F."/>
            <person name="Feng L."/>
            <person name="Wang L."/>
            <person name="Alam M."/>
        </authorList>
    </citation>
    <scope>NUCLEOTIDE SEQUENCE [LARGE SCALE GENOMIC DNA]</scope>
    <source>
        <strain>Isolate V4</strain>
    </source>
</reference>